<gene>
    <name type="primary">TMEM132A</name>
    <name type="synonym">HSPA5BP1</name>
    <name type="synonym">KIAA1583</name>
</gene>
<organism>
    <name type="scientific">Homo sapiens</name>
    <name type="common">Human</name>
    <dbReference type="NCBI Taxonomy" id="9606"/>
    <lineage>
        <taxon>Eukaryota</taxon>
        <taxon>Metazoa</taxon>
        <taxon>Chordata</taxon>
        <taxon>Craniata</taxon>
        <taxon>Vertebrata</taxon>
        <taxon>Euteleostomi</taxon>
        <taxon>Mammalia</taxon>
        <taxon>Eutheria</taxon>
        <taxon>Euarchontoglires</taxon>
        <taxon>Primates</taxon>
        <taxon>Haplorrhini</taxon>
        <taxon>Catarrhini</taxon>
        <taxon>Hominidae</taxon>
        <taxon>Homo</taxon>
    </lineage>
</organism>
<accession>Q24JP5</accession>
<accession>Q69YU7</accession>
<accession>Q86VZ8</accession>
<accession>Q86W97</accession>
<accession>Q9H8K3</accession>
<accession>Q9HCI9</accession>
<accession>Q9NWY0</accession>
<comment type="function">
    <text evidence="1">May play a role in embryonic and postnatal development of the brain. Increased resistance to cell death induced by serum starvation in cultured cells. Regulates cAMP-induced GFAP gene expression via STAT3 phosphorylation (By similarity).</text>
</comment>
<comment type="subunit">
    <text evidence="1">Interacts with HSPA5/GRP78.</text>
</comment>
<comment type="subcellular location">
    <subcellularLocation>
        <location evidence="1">Golgi apparatus membrane</location>
        <topology evidence="1">Single-pass type I membrane protein</topology>
    </subcellularLocation>
    <subcellularLocation>
        <location evidence="1">Endoplasmic reticulum membrane</location>
        <topology evidence="1">Single-pass type I membrane protein</topology>
    </subcellularLocation>
</comment>
<comment type="alternative products">
    <event type="alternative splicing"/>
    <isoform>
        <id>Q24JP5-1</id>
        <name>1</name>
        <sequence type="displayed"/>
    </isoform>
    <isoform>
        <id>Q24JP5-2</id>
        <name>2</name>
        <sequence type="described" ref="VSP_025304"/>
    </isoform>
    <isoform>
        <id>Q24JP5-3</id>
        <name>3</name>
        <sequence type="described" ref="VSP_025302 VSP_025305 VSP_025306"/>
    </isoform>
    <isoform>
        <id>Q24JP5-4</id>
        <name>4</name>
        <sequence type="described" ref="VSP_025303 VSP_025304"/>
    </isoform>
</comment>
<comment type="similarity">
    <text evidence="9">Belongs to the TMEM132 family.</text>
</comment>
<comment type="sequence caution" evidence="9">
    <conflict type="erroneous initiation">
        <sequence resource="EMBL-CDS" id="BAB13409"/>
    </conflict>
</comment>
<comment type="sequence caution" evidence="9">
    <conflict type="erroneous initiation">
        <sequence resource="EMBL-CDS" id="BAB14613"/>
    </conflict>
</comment>
<dbReference type="EMBL" id="AB046803">
    <property type="protein sequence ID" value="BAB13409.1"/>
    <property type="status" value="ALT_INIT"/>
    <property type="molecule type" value="mRNA"/>
</dbReference>
<dbReference type="EMBL" id="AK000546">
    <property type="protein sequence ID" value="BAA91245.1"/>
    <property type="molecule type" value="mRNA"/>
</dbReference>
<dbReference type="EMBL" id="AK023577">
    <property type="protein sequence ID" value="BAB14613.1"/>
    <property type="status" value="ALT_INIT"/>
    <property type="molecule type" value="mRNA"/>
</dbReference>
<dbReference type="EMBL" id="BC028106">
    <property type="protein sequence ID" value="AAH28106.1"/>
    <property type="molecule type" value="mRNA"/>
</dbReference>
<dbReference type="EMBL" id="BC032059">
    <property type="protein sequence ID" value="AAH32059.1"/>
    <property type="molecule type" value="mRNA"/>
</dbReference>
<dbReference type="EMBL" id="BC114569">
    <property type="protein sequence ID" value="AAI14570.1"/>
    <property type="molecule type" value="mRNA"/>
</dbReference>
<dbReference type="EMBL" id="AL359557">
    <property type="protein sequence ID" value="CAH10668.2"/>
    <property type="molecule type" value="mRNA"/>
</dbReference>
<dbReference type="CCDS" id="CCDS44618.1">
    <molecule id="Q24JP5-1"/>
</dbReference>
<dbReference type="CCDS" id="CCDS7997.1">
    <molecule id="Q24JP5-2"/>
</dbReference>
<dbReference type="RefSeq" id="NP_060340.2">
    <molecule id="Q24JP5-2"/>
    <property type="nucleotide sequence ID" value="NM_017870.3"/>
</dbReference>
<dbReference type="RefSeq" id="NP_821174.1">
    <molecule id="Q24JP5-1"/>
    <property type="nucleotide sequence ID" value="NM_178031.3"/>
</dbReference>
<dbReference type="BioGRID" id="120309">
    <property type="interactions" value="162"/>
</dbReference>
<dbReference type="FunCoup" id="Q24JP5">
    <property type="interactions" value="1180"/>
</dbReference>
<dbReference type="IntAct" id="Q24JP5">
    <property type="interactions" value="118"/>
</dbReference>
<dbReference type="MINT" id="Q24JP5"/>
<dbReference type="STRING" id="9606.ENSP00000005286"/>
<dbReference type="TCDB" id="8.A.143.1.1">
    <property type="family name" value="the tmem132 (tmem132) family"/>
</dbReference>
<dbReference type="GlyCosmos" id="Q24JP5">
    <property type="glycosylation" value="2 sites, 1 glycan"/>
</dbReference>
<dbReference type="GlyGen" id="Q24JP5">
    <property type="glycosylation" value="6 sites, 2 N-linked glycans (2 sites), 1 O-linked glycan (1 site)"/>
</dbReference>
<dbReference type="iPTMnet" id="Q24JP5"/>
<dbReference type="PhosphoSitePlus" id="Q24JP5"/>
<dbReference type="SwissPalm" id="Q24JP5"/>
<dbReference type="BioMuta" id="TMEM132A"/>
<dbReference type="DMDM" id="121940967"/>
<dbReference type="jPOST" id="Q24JP5"/>
<dbReference type="MassIVE" id="Q24JP5"/>
<dbReference type="PaxDb" id="9606-ENSP00000005286"/>
<dbReference type="PeptideAtlas" id="Q24JP5"/>
<dbReference type="ProteomicsDB" id="61259">
    <molecule id="Q24JP5-1"/>
</dbReference>
<dbReference type="ProteomicsDB" id="61260">
    <molecule id="Q24JP5-2"/>
</dbReference>
<dbReference type="ProteomicsDB" id="61261">
    <molecule id="Q24JP5-3"/>
</dbReference>
<dbReference type="ProteomicsDB" id="61262">
    <molecule id="Q24JP5-4"/>
</dbReference>
<dbReference type="Pumba" id="Q24JP5"/>
<dbReference type="ABCD" id="Q24JP5">
    <property type="antibodies" value="4 sequenced antibodies"/>
</dbReference>
<dbReference type="Antibodypedia" id="52906">
    <property type="antibodies" value="70 antibodies from 22 providers"/>
</dbReference>
<dbReference type="DNASU" id="54972"/>
<dbReference type="Ensembl" id="ENST00000005286.8">
    <molecule id="Q24JP5-2"/>
    <property type="protein sequence ID" value="ENSP00000005286.4"/>
    <property type="gene ID" value="ENSG00000006118.15"/>
</dbReference>
<dbReference type="Ensembl" id="ENST00000453848.7">
    <molecule id="Q24JP5-1"/>
    <property type="protein sequence ID" value="ENSP00000405823.2"/>
    <property type="gene ID" value="ENSG00000006118.15"/>
</dbReference>
<dbReference type="GeneID" id="54972"/>
<dbReference type="KEGG" id="hsa:54972"/>
<dbReference type="MANE-Select" id="ENST00000453848.7">
    <property type="protein sequence ID" value="ENSP00000405823.2"/>
    <property type="RefSeq nucleotide sequence ID" value="NM_178031.3"/>
    <property type="RefSeq protein sequence ID" value="NP_821174.1"/>
</dbReference>
<dbReference type="UCSC" id="uc001nqi.4">
    <molecule id="Q24JP5-1"/>
    <property type="organism name" value="human"/>
</dbReference>
<dbReference type="AGR" id="HGNC:31092"/>
<dbReference type="CTD" id="54972"/>
<dbReference type="DisGeNET" id="54972"/>
<dbReference type="GeneCards" id="TMEM132A"/>
<dbReference type="HGNC" id="HGNC:31092">
    <property type="gene designation" value="TMEM132A"/>
</dbReference>
<dbReference type="HPA" id="ENSG00000006118">
    <property type="expression patterns" value="Tissue enhanced (brain, choroid plexus)"/>
</dbReference>
<dbReference type="MIM" id="617363">
    <property type="type" value="gene"/>
</dbReference>
<dbReference type="neXtProt" id="NX_Q24JP5"/>
<dbReference type="OpenTargets" id="ENSG00000006118"/>
<dbReference type="PharmGKB" id="PA134886953"/>
<dbReference type="VEuPathDB" id="HostDB:ENSG00000006118"/>
<dbReference type="eggNOG" id="KOG4789">
    <property type="taxonomic scope" value="Eukaryota"/>
</dbReference>
<dbReference type="GeneTree" id="ENSGT00940000161414"/>
<dbReference type="HOGENOM" id="CLU_009871_0_0_1"/>
<dbReference type="InParanoid" id="Q24JP5"/>
<dbReference type="OMA" id="GPCGPWL"/>
<dbReference type="OrthoDB" id="10026202at2759"/>
<dbReference type="PAN-GO" id="Q24JP5">
    <property type="GO annotations" value="2 GO annotations based on evolutionary models"/>
</dbReference>
<dbReference type="PhylomeDB" id="Q24JP5"/>
<dbReference type="TreeFam" id="TF314981"/>
<dbReference type="PathwayCommons" id="Q24JP5"/>
<dbReference type="Reactome" id="R-HSA-381426">
    <property type="pathway name" value="Regulation of Insulin-like Growth Factor (IGF) transport and uptake by Insulin-like Growth Factor Binding Proteins (IGFBPs)"/>
</dbReference>
<dbReference type="Reactome" id="R-HSA-8957275">
    <property type="pathway name" value="Post-translational protein phosphorylation"/>
</dbReference>
<dbReference type="SignaLink" id="Q24JP5"/>
<dbReference type="BioGRID-ORCS" id="54972">
    <property type="hits" value="41 hits in 1156 CRISPR screens"/>
</dbReference>
<dbReference type="ChiTaRS" id="TMEM132A">
    <property type="organism name" value="human"/>
</dbReference>
<dbReference type="GenomeRNAi" id="54972"/>
<dbReference type="Pharos" id="Q24JP5">
    <property type="development level" value="Tbio"/>
</dbReference>
<dbReference type="PRO" id="PR:Q24JP5"/>
<dbReference type="Proteomes" id="UP000005640">
    <property type="component" value="Chromosome 11"/>
</dbReference>
<dbReference type="RNAct" id="Q24JP5">
    <property type="molecule type" value="protein"/>
</dbReference>
<dbReference type="Bgee" id="ENSG00000006118">
    <property type="expression patterns" value="Expressed in cortical plate and 140 other cell types or tissues"/>
</dbReference>
<dbReference type="ExpressionAtlas" id="Q24JP5">
    <property type="expression patterns" value="baseline and differential"/>
</dbReference>
<dbReference type="GO" id="GO:0005783">
    <property type="term" value="C:endoplasmic reticulum"/>
    <property type="evidence" value="ECO:0000318"/>
    <property type="project" value="GO_Central"/>
</dbReference>
<dbReference type="GO" id="GO:0005788">
    <property type="term" value="C:endoplasmic reticulum lumen"/>
    <property type="evidence" value="ECO:0000304"/>
    <property type="project" value="Reactome"/>
</dbReference>
<dbReference type="GO" id="GO:0005789">
    <property type="term" value="C:endoplasmic reticulum membrane"/>
    <property type="evidence" value="ECO:0007669"/>
    <property type="project" value="UniProtKB-SubCell"/>
</dbReference>
<dbReference type="GO" id="GO:0070062">
    <property type="term" value="C:extracellular exosome"/>
    <property type="evidence" value="ECO:0007005"/>
    <property type="project" value="UniProtKB"/>
</dbReference>
<dbReference type="GO" id="GO:0000139">
    <property type="term" value="C:Golgi membrane"/>
    <property type="evidence" value="ECO:0007669"/>
    <property type="project" value="UniProtKB-SubCell"/>
</dbReference>
<dbReference type="GO" id="GO:0005886">
    <property type="term" value="C:plasma membrane"/>
    <property type="evidence" value="ECO:0007669"/>
    <property type="project" value="Ensembl"/>
</dbReference>
<dbReference type="GO" id="GO:0042803">
    <property type="term" value="F:protein homodimerization activity"/>
    <property type="evidence" value="ECO:0007669"/>
    <property type="project" value="Ensembl"/>
</dbReference>
<dbReference type="GO" id="GO:0042177">
    <property type="term" value="P:negative regulation of protein catabolic process"/>
    <property type="evidence" value="ECO:0007669"/>
    <property type="project" value="Ensembl"/>
</dbReference>
<dbReference type="GO" id="GO:0061357">
    <property type="term" value="P:positive regulation of Wnt protein secretion"/>
    <property type="evidence" value="ECO:0007669"/>
    <property type="project" value="Ensembl"/>
</dbReference>
<dbReference type="GO" id="GO:0030177">
    <property type="term" value="P:positive regulation of Wnt signaling pathway"/>
    <property type="evidence" value="ECO:0007669"/>
    <property type="project" value="Ensembl"/>
</dbReference>
<dbReference type="InterPro" id="IPR055422">
    <property type="entry name" value="Ig_TMEM132_2nd"/>
</dbReference>
<dbReference type="InterPro" id="IPR055423">
    <property type="entry name" value="Ig_TMEM132_5th"/>
</dbReference>
<dbReference type="InterPro" id="IPR055424">
    <property type="entry name" value="Ig_TMEM132_6th"/>
</dbReference>
<dbReference type="InterPro" id="IPR026307">
    <property type="entry name" value="TMEM132"/>
</dbReference>
<dbReference type="InterPro" id="IPR055421">
    <property type="entry name" value="TMEM132_3rd"/>
</dbReference>
<dbReference type="InterPro" id="IPR031436">
    <property type="entry name" value="TMEM132_C"/>
</dbReference>
<dbReference type="InterPro" id="IPR031437">
    <property type="entry name" value="TMEM132_M"/>
</dbReference>
<dbReference type="InterPro" id="IPR031435">
    <property type="entry name" value="TMEM132_N"/>
</dbReference>
<dbReference type="PANTHER" id="PTHR13388">
    <property type="entry name" value="DETONATOR, ISOFORM E"/>
    <property type="match status" value="1"/>
</dbReference>
<dbReference type="PANTHER" id="PTHR13388:SF9">
    <property type="entry name" value="TRANSMEMBRANE PROTEIN 132A"/>
    <property type="match status" value="1"/>
</dbReference>
<dbReference type="Pfam" id="PF23481">
    <property type="entry name" value="Ig_TMEM132_2nd"/>
    <property type="match status" value="1"/>
</dbReference>
<dbReference type="Pfam" id="PF16070">
    <property type="entry name" value="Ig_TMEM132_4th"/>
    <property type="match status" value="1"/>
</dbReference>
<dbReference type="Pfam" id="PF23486">
    <property type="entry name" value="Ig_TMEM132_5th"/>
    <property type="match status" value="1"/>
</dbReference>
<dbReference type="Pfam" id="PF23487">
    <property type="entry name" value="Ig_TMEM132_6th"/>
    <property type="match status" value="1"/>
</dbReference>
<dbReference type="Pfam" id="PF23039">
    <property type="entry name" value="TMEM132_3rd"/>
    <property type="match status" value="1"/>
</dbReference>
<dbReference type="Pfam" id="PF15706">
    <property type="entry name" value="TMEM132_C"/>
    <property type="match status" value="1"/>
</dbReference>
<dbReference type="Pfam" id="PF15705">
    <property type="entry name" value="TMEM132_N"/>
    <property type="match status" value="1"/>
</dbReference>
<name>T132A_HUMAN</name>
<sequence>MCARMAGRTTAAPRGPYGPWLCLLVALALDVVRVDCGQAPLDPVYLPAALELLDAPEHFRVQQVGHYPPANSSLSSRSETFLLLQPWPRAQPLLRASYPPFATQQVVPPRVTEPHQRPVPWDVRAVSVEAAVTPAEPYARVLFHLKGQDWPPGSGSLPCARLHATHPAGTAHQACRFQPSLGACVVELELPSHWFSQASTTRAELAYTLEPAAEGPGGCGSGEENDPGEQALPVGGVELRPADPPQYQEVPLDEAVTLRVPDMPVRPGQLFSATLLLRHNFTASLLTLRIKVKKGLHVTAARPAQPTLWTAKLDRFKGSRHHTTLITCHRAGLTEPDSSPLELSEFLWVDFVVENSTGGGVAVTRPVTWQLEYPGQAPEAEKDKMVWEILVSERDIRALIPLAKAEELVNTAPLTGVPQHVPVRLVTVDGGGALVEVTEHVGCESANTQVLQVSEACDAVFVAGKESRGARGVRVDFWWRRLRASLRLTVWAPLLPLRIELTDTTLEQVRGWRVPGPAEGPAEPAAEASDEAERRARGCHLQYQRAGVRFLAPFAAHPLDGGRRLTHLLGPDWLLDVSHLVAPHARVLDSRVASLEGGRVVVGREPGVTSIEVRSPLSDSILGEQALAVTDDKVSVLELRVQPVMGISLTLSRGTAHPGEVTATCWAQSALPAPKQEVALSLWLSFSDHTVAPAELYDRRDLGLSVSAEEPGAILPAEEQGAQLGVVVSGAGAEGLPLHVALHPPEPCRRGRHRVPLASGTAWLGLPPASTPAPALPSSPAWSPPATEATMGGKRQVAGSVGGNTGVRGKFERAEEEARKEETEAREEEEEEEEEMVPAPQHVTELELGMYALLGVFCVAIFIFLVNGVVFVLRYQRKEPPDSATDPTSPQPHNWVWLGTDQEELSRQLDRQSPGPPKGEGSCPCESGGGGEAPTLAPGPPGGTTSSSSTLARKEAGGRRKRVEFVTFAPAPPAQSPEEPVGAPAVQSILVAGEEDIRWVCEDMGLKDPEELRNYMERIRGSS</sequence>
<proteinExistence type="evidence at protein level"/>
<keyword id="KW-0025">Alternative splicing</keyword>
<keyword id="KW-0256">Endoplasmic reticulum</keyword>
<keyword id="KW-0325">Glycoprotein</keyword>
<keyword id="KW-0333">Golgi apparatus</keyword>
<keyword id="KW-0472">Membrane</keyword>
<keyword id="KW-0597">Phosphoprotein</keyword>
<keyword id="KW-1267">Proteomics identification</keyword>
<keyword id="KW-1185">Reference proteome</keyword>
<keyword id="KW-0732">Signal</keyword>
<keyword id="KW-0812">Transmembrane</keyword>
<keyword id="KW-1133">Transmembrane helix</keyword>
<feature type="signal peptide" evidence="2">
    <location>
        <begin position="1"/>
        <end position="35"/>
    </location>
</feature>
<feature type="chain" id="PRO_0000287096" description="Transmembrane protein 132A">
    <location>
        <begin position="36"/>
        <end position="1023"/>
    </location>
</feature>
<feature type="topological domain" description="Extracellular" evidence="2">
    <location>
        <begin position="36"/>
        <end position="852"/>
    </location>
</feature>
<feature type="transmembrane region" description="Helical" evidence="2">
    <location>
        <begin position="853"/>
        <end position="873"/>
    </location>
</feature>
<feature type="topological domain" description="Cytoplasmic" evidence="2">
    <location>
        <begin position="874"/>
        <end position="1023"/>
    </location>
</feature>
<feature type="region of interest" description="Disordered" evidence="3">
    <location>
        <begin position="212"/>
        <end position="246"/>
    </location>
</feature>
<feature type="region of interest" description="Disordered" evidence="3">
    <location>
        <begin position="512"/>
        <end position="533"/>
    </location>
</feature>
<feature type="region of interest" description="Binds to HSPA5/GRP78" evidence="1">
    <location>
        <begin position="611"/>
        <end position="916"/>
    </location>
</feature>
<feature type="region of interest" description="Confers cellular localization similar to full-length form" evidence="1">
    <location>
        <begin position="671"/>
        <end position="1023"/>
    </location>
</feature>
<feature type="region of interest" description="Disordered" evidence="3">
    <location>
        <begin position="766"/>
        <end position="839"/>
    </location>
</feature>
<feature type="region of interest" description="Disordered" evidence="3">
    <location>
        <begin position="905"/>
        <end position="961"/>
    </location>
</feature>
<feature type="compositionally biased region" description="Low complexity" evidence="3">
    <location>
        <begin position="515"/>
        <end position="527"/>
    </location>
</feature>
<feature type="compositionally biased region" description="Low complexity" evidence="3">
    <location>
        <begin position="778"/>
        <end position="790"/>
    </location>
</feature>
<feature type="compositionally biased region" description="Basic and acidic residues" evidence="3">
    <location>
        <begin position="809"/>
        <end position="823"/>
    </location>
</feature>
<feature type="compositionally biased region" description="Acidic residues" evidence="3">
    <location>
        <begin position="824"/>
        <end position="836"/>
    </location>
</feature>
<feature type="modified residue" description="Phosphoserine; by FAM20C" evidence="5">
    <location>
        <position position="529"/>
    </location>
</feature>
<feature type="glycosylation site" description="N-linked (GlcNAc...) asparagine" evidence="2">
    <location>
        <position position="280"/>
    </location>
</feature>
<feature type="splice variant" id="VSP_025302" description="In isoform 3." evidence="6">
    <original>MCARMAGRTTAAPRGPYGPWLCLLVALALDVVR</original>
    <variation>MAPGSAPASSGAVIISPSYASS</variation>
    <location>
        <begin position="1"/>
        <end position="33"/>
    </location>
</feature>
<feature type="splice variant" id="VSP_025303" description="In isoform 4." evidence="7">
    <location>
        <begin position="46"/>
        <end position="295"/>
    </location>
</feature>
<feature type="splice variant" id="VSP_025304" description="In isoform 2 and isoform 4." evidence="7 8">
    <original>D</original>
    <variation>DS</variation>
    <location>
        <position position="337"/>
    </location>
</feature>
<feature type="splice variant" id="VSP_025305" description="In isoform 3." evidence="6">
    <original>AEELVNTAPLTGVPQHVPV</original>
    <variation>VRRPPSLPGKAGGQVPGAP</variation>
    <location>
        <begin position="405"/>
        <end position="423"/>
    </location>
</feature>
<feature type="splice variant" id="VSP_025306" description="In isoform 3." evidence="6">
    <location>
        <begin position="424"/>
        <end position="1023"/>
    </location>
</feature>
<feature type="sequence variant" id="VAR_032262" description="In dbSNP:rs524523.">
    <original>R</original>
    <variation>H</variation>
    <location>
        <position position="699"/>
    </location>
</feature>
<feature type="sequence variant" id="VAR_032263" description="In dbSNP:rs2469887." evidence="4">
    <original>A</original>
    <variation>V</variation>
    <location>
        <position position="969"/>
    </location>
</feature>
<feature type="sequence conflict" description="In Ref. 2; BAA91245." evidence="9" ref="2">
    <original>T</original>
    <variation>R</variation>
    <location>
        <position position="10"/>
    </location>
</feature>
<feature type="sequence conflict" description="In Ref. 2; BAB14613." evidence="9" ref="2">
    <original>E</original>
    <variation>K</variation>
    <location>
        <position position="824"/>
    </location>
</feature>
<evidence type="ECO:0000250" key="1"/>
<evidence type="ECO:0000255" key="2"/>
<evidence type="ECO:0000256" key="3">
    <source>
        <dbReference type="SAM" id="MobiDB-lite"/>
    </source>
</evidence>
<evidence type="ECO:0000269" key="4">
    <source>
    </source>
</evidence>
<evidence type="ECO:0000269" key="5">
    <source>
    </source>
</evidence>
<evidence type="ECO:0000303" key="6">
    <source>
    </source>
</evidence>
<evidence type="ECO:0000303" key="7">
    <source>
    </source>
</evidence>
<evidence type="ECO:0000303" key="8">
    <source>
    </source>
</evidence>
<evidence type="ECO:0000305" key="9"/>
<reference key="1">
    <citation type="journal article" date="2000" name="DNA Res.">
        <title>Prediction of the coding sequences of unidentified human genes. XVIII. The complete sequences of 100 new cDNA clones from brain which code for large proteins in vitro.</title>
        <authorList>
            <person name="Nagase T."/>
            <person name="Kikuno R."/>
            <person name="Nakayama M."/>
            <person name="Hirosawa M."/>
            <person name="Ohara O."/>
        </authorList>
    </citation>
    <scope>NUCLEOTIDE SEQUENCE [LARGE SCALE MRNA] (ISOFORM 3)</scope>
    <source>
        <tissue>Brain</tissue>
    </source>
</reference>
<reference key="2">
    <citation type="journal article" date="2004" name="Nat. Genet.">
        <title>Complete sequencing and characterization of 21,243 full-length human cDNAs.</title>
        <authorList>
            <person name="Ota T."/>
            <person name="Suzuki Y."/>
            <person name="Nishikawa T."/>
            <person name="Otsuki T."/>
            <person name="Sugiyama T."/>
            <person name="Irie R."/>
            <person name="Wakamatsu A."/>
            <person name="Hayashi K."/>
            <person name="Sato H."/>
            <person name="Nagai K."/>
            <person name="Kimura K."/>
            <person name="Makita H."/>
            <person name="Sekine M."/>
            <person name="Obayashi M."/>
            <person name="Nishi T."/>
            <person name="Shibahara T."/>
            <person name="Tanaka T."/>
            <person name="Ishii S."/>
            <person name="Yamamoto J."/>
            <person name="Saito K."/>
            <person name="Kawai Y."/>
            <person name="Isono Y."/>
            <person name="Nakamura Y."/>
            <person name="Nagahari K."/>
            <person name="Murakami K."/>
            <person name="Yasuda T."/>
            <person name="Iwayanagi T."/>
            <person name="Wagatsuma M."/>
            <person name="Shiratori A."/>
            <person name="Sudo H."/>
            <person name="Hosoiri T."/>
            <person name="Kaku Y."/>
            <person name="Kodaira H."/>
            <person name="Kondo H."/>
            <person name="Sugawara M."/>
            <person name="Takahashi M."/>
            <person name="Kanda K."/>
            <person name="Yokoi T."/>
            <person name="Furuya T."/>
            <person name="Kikkawa E."/>
            <person name="Omura Y."/>
            <person name="Abe K."/>
            <person name="Kamihara K."/>
            <person name="Katsuta N."/>
            <person name="Sato K."/>
            <person name="Tanikawa M."/>
            <person name="Yamazaki M."/>
            <person name="Ninomiya K."/>
            <person name="Ishibashi T."/>
            <person name="Yamashita H."/>
            <person name="Murakawa K."/>
            <person name="Fujimori K."/>
            <person name="Tanai H."/>
            <person name="Kimata M."/>
            <person name="Watanabe M."/>
            <person name="Hiraoka S."/>
            <person name="Chiba Y."/>
            <person name="Ishida S."/>
            <person name="Ono Y."/>
            <person name="Takiguchi S."/>
            <person name="Watanabe S."/>
            <person name="Yosida M."/>
            <person name="Hotuta T."/>
            <person name="Kusano J."/>
            <person name="Kanehori K."/>
            <person name="Takahashi-Fujii A."/>
            <person name="Hara H."/>
            <person name="Tanase T.-O."/>
            <person name="Nomura Y."/>
            <person name="Togiya S."/>
            <person name="Komai F."/>
            <person name="Hara R."/>
            <person name="Takeuchi K."/>
            <person name="Arita M."/>
            <person name="Imose N."/>
            <person name="Musashino K."/>
            <person name="Yuuki H."/>
            <person name="Oshima A."/>
            <person name="Sasaki N."/>
            <person name="Aotsuka S."/>
            <person name="Yoshikawa Y."/>
            <person name="Matsunawa H."/>
            <person name="Ichihara T."/>
            <person name="Shiohata N."/>
            <person name="Sano S."/>
            <person name="Moriya S."/>
            <person name="Momiyama H."/>
            <person name="Satoh N."/>
            <person name="Takami S."/>
            <person name="Terashima Y."/>
            <person name="Suzuki O."/>
            <person name="Nakagawa S."/>
            <person name="Senoh A."/>
            <person name="Mizoguchi H."/>
            <person name="Goto Y."/>
            <person name="Shimizu F."/>
            <person name="Wakebe H."/>
            <person name="Hishigaki H."/>
            <person name="Watanabe T."/>
            <person name="Sugiyama A."/>
            <person name="Takemoto M."/>
            <person name="Kawakami B."/>
            <person name="Yamazaki M."/>
            <person name="Watanabe K."/>
            <person name="Kumagai A."/>
            <person name="Itakura S."/>
            <person name="Fukuzumi Y."/>
            <person name="Fujimori Y."/>
            <person name="Komiyama M."/>
            <person name="Tashiro H."/>
            <person name="Tanigami A."/>
            <person name="Fujiwara T."/>
            <person name="Ono T."/>
            <person name="Yamada K."/>
            <person name="Fujii Y."/>
            <person name="Ozaki K."/>
            <person name="Hirao M."/>
            <person name="Ohmori Y."/>
            <person name="Kawabata A."/>
            <person name="Hikiji T."/>
            <person name="Kobatake N."/>
            <person name="Inagaki H."/>
            <person name="Ikema Y."/>
            <person name="Okamoto S."/>
            <person name="Okitani R."/>
            <person name="Kawakami T."/>
            <person name="Noguchi S."/>
            <person name="Itoh T."/>
            <person name="Shigeta K."/>
            <person name="Senba T."/>
            <person name="Matsumura K."/>
            <person name="Nakajima Y."/>
            <person name="Mizuno T."/>
            <person name="Morinaga M."/>
            <person name="Sasaki M."/>
            <person name="Togashi T."/>
            <person name="Oyama M."/>
            <person name="Hata H."/>
            <person name="Watanabe M."/>
            <person name="Komatsu T."/>
            <person name="Mizushima-Sugano J."/>
            <person name="Satoh T."/>
            <person name="Shirai Y."/>
            <person name="Takahashi Y."/>
            <person name="Nakagawa K."/>
            <person name="Okumura K."/>
            <person name="Nagase T."/>
            <person name="Nomura N."/>
            <person name="Kikuchi H."/>
            <person name="Masuho Y."/>
            <person name="Yamashita R."/>
            <person name="Nakai K."/>
            <person name="Yada T."/>
            <person name="Nakamura Y."/>
            <person name="Ohara O."/>
            <person name="Isogai T."/>
            <person name="Sugano S."/>
        </authorList>
    </citation>
    <scope>NUCLEOTIDE SEQUENCE [LARGE SCALE MRNA] (ISOFORM 4)</scope>
    <scope>NUCLEOTIDE SEQUENCE [LARGE SCALE MRNA] OF 364-1023 (ISOFORM 1)</scope>
    <scope>VARIANT VAL-969</scope>
    <source>
        <tissue>Placenta</tissue>
    </source>
</reference>
<reference key="3">
    <citation type="journal article" date="2004" name="Genome Res.">
        <title>The status, quality, and expansion of the NIH full-length cDNA project: the Mammalian Gene Collection (MGC).</title>
        <authorList>
            <consortium name="The MGC Project Team"/>
        </authorList>
    </citation>
    <scope>NUCLEOTIDE SEQUENCE [LARGE SCALE MRNA] (ISOFORM 1)</scope>
    <scope>NUCLEOTIDE SEQUENCE [LARGE SCALE MRNA] OF 1-560 (ISOFORM 2)</scope>
    <source>
        <tissue>Brain</tissue>
    </source>
</reference>
<reference key="4">
    <citation type="journal article" date="2007" name="BMC Genomics">
        <title>The full-ORF clone resource of the German cDNA consortium.</title>
        <authorList>
            <person name="Bechtel S."/>
            <person name="Rosenfelder H."/>
            <person name="Duda A."/>
            <person name="Schmidt C.P."/>
            <person name="Ernst U."/>
            <person name="Wellenreuther R."/>
            <person name="Mehrle A."/>
            <person name="Schuster C."/>
            <person name="Bahr A."/>
            <person name="Bloecker H."/>
            <person name="Heubner D."/>
            <person name="Hoerlein A."/>
            <person name="Michel G."/>
            <person name="Wedler H."/>
            <person name="Koehrer K."/>
            <person name="Ottenwaelder B."/>
            <person name="Poustka A."/>
            <person name="Wiemann S."/>
            <person name="Schupp I."/>
        </authorList>
    </citation>
    <scope>NUCLEOTIDE SEQUENCE [LARGE SCALE MRNA] OF 188-560 (ISOFORM 1)</scope>
    <source>
        <tissue>Brain</tissue>
    </source>
</reference>
<reference key="5">
    <citation type="journal article" date="2015" name="Cell">
        <title>A single kinase generates the majority of the secreted phosphoproteome.</title>
        <authorList>
            <person name="Tagliabracci V.S."/>
            <person name="Wiley S.E."/>
            <person name="Guo X."/>
            <person name="Kinch L.N."/>
            <person name="Durrant E."/>
            <person name="Wen J."/>
            <person name="Xiao J."/>
            <person name="Cui J."/>
            <person name="Nguyen K.B."/>
            <person name="Engel J.L."/>
            <person name="Coon J.J."/>
            <person name="Grishin N."/>
            <person name="Pinna L.A."/>
            <person name="Pagliarini D.J."/>
            <person name="Dixon J.E."/>
        </authorList>
    </citation>
    <scope>PHOSPHORYLATION AT SER-529</scope>
</reference>
<protein>
    <recommendedName>
        <fullName>Transmembrane protein 132A</fullName>
    </recommendedName>
    <alternativeName>
        <fullName>HSPA5-binding protein 1</fullName>
    </alternativeName>
</protein>